<dbReference type="EC" id="5.3.1.9" evidence="1"/>
<dbReference type="EMBL" id="CP000733">
    <property type="protein sequence ID" value="ABS77556.1"/>
    <property type="molecule type" value="Genomic_DNA"/>
</dbReference>
<dbReference type="RefSeq" id="WP_011996827.1">
    <property type="nucleotide sequence ID" value="NC_009727.1"/>
</dbReference>
<dbReference type="SMR" id="A9KFK2"/>
<dbReference type="KEGG" id="cbd:CBUD_0913"/>
<dbReference type="HOGENOM" id="CLU_017947_3_1_6"/>
<dbReference type="UniPathway" id="UPA00109">
    <property type="reaction ID" value="UER00181"/>
</dbReference>
<dbReference type="UniPathway" id="UPA00138"/>
<dbReference type="Proteomes" id="UP000008555">
    <property type="component" value="Chromosome"/>
</dbReference>
<dbReference type="GO" id="GO:0005829">
    <property type="term" value="C:cytosol"/>
    <property type="evidence" value="ECO:0007669"/>
    <property type="project" value="TreeGrafter"/>
</dbReference>
<dbReference type="GO" id="GO:0097367">
    <property type="term" value="F:carbohydrate derivative binding"/>
    <property type="evidence" value="ECO:0007669"/>
    <property type="project" value="InterPro"/>
</dbReference>
<dbReference type="GO" id="GO:0004347">
    <property type="term" value="F:glucose-6-phosphate isomerase activity"/>
    <property type="evidence" value="ECO:0007669"/>
    <property type="project" value="UniProtKB-UniRule"/>
</dbReference>
<dbReference type="GO" id="GO:0048029">
    <property type="term" value="F:monosaccharide binding"/>
    <property type="evidence" value="ECO:0007669"/>
    <property type="project" value="TreeGrafter"/>
</dbReference>
<dbReference type="GO" id="GO:0006094">
    <property type="term" value="P:gluconeogenesis"/>
    <property type="evidence" value="ECO:0007669"/>
    <property type="project" value="UniProtKB-UniRule"/>
</dbReference>
<dbReference type="GO" id="GO:0051156">
    <property type="term" value="P:glucose 6-phosphate metabolic process"/>
    <property type="evidence" value="ECO:0007669"/>
    <property type="project" value="TreeGrafter"/>
</dbReference>
<dbReference type="GO" id="GO:0006096">
    <property type="term" value="P:glycolytic process"/>
    <property type="evidence" value="ECO:0007669"/>
    <property type="project" value="UniProtKB-UniRule"/>
</dbReference>
<dbReference type="CDD" id="cd05015">
    <property type="entry name" value="SIS_PGI_1"/>
    <property type="match status" value="1"/>
</dbReference>
<dbReference type="CDD" id="cd05016">
    <property type="entry name" value="SIS_PGI_2"/>
    <property type="match status" value="1"/>
</dbReference>
<dbReference type="Gene3D" id="1.10.1390.10">
    <property type="match status" value="1"/>
</dbReference>
<dbReference type="Gene3D" id="3.40.50.10490">
    <property type="entry name" value="Glucose-6-phosphate isomerase like protein, domain 1"/>
    <property type="match status" value="2"/>
</dbReference>
<dbReference type="HAMAP" id="MF_00473">
    <property type="entry name" value="G6P_isomerase"/>
    <property type="match status" value="1"/>
</dbReference>
<dbReference type="InterPro" id="IPR001672">
    <property type="entry name" value="G6P_Isomerase"/>
</dbReference>
<dbReference type="InterPro" id="IPR023096">
    <property type="entry name" value="G6P_Isomerase_C"/>
</dbReference>
<dbReference type="InterPro" id="IPR018189">
    <property type="entry name" value="Phosphoglucose_isomerase_CS"/>
</dbReference>
<dbReference type="InterPro" id="IPR046348">
    <property type="entry name" value="SIS_dom_sf"/>
</dbReference>
<dbReference type="InterPro" id="IPR035476">
    <property type="entry name" value="SIS_PGI_1"/>
</dbReference>
<dbReference type="InterPro" id="IPR035482">
    <property type="entry name" value="SIS_PGI_2"/>
</dbReference>
<dbReference type="NCBIfam" id="NF001211">
    <property type="entry name" value="PRK00179.1"/>
    <property type="match status" value="1"/>
</dbReference>
<dbReference type="PANTHER" id="PTHR11469">
    <property type="entry name" value="GLUCOSE-6-PHOSPHATE ISOMERASE"/>
    <property type="match status" value="1"/>
</dbReference>
<dbReference type="PANTHER" id="PTHR11469:SF1">
    <property type="entry name" value="GLUCOSE-6-PHOSPHATE ISOMERASE"/>
    <property type="match status" value="1"/>
</dbReference>
<dbReference type="Pfam" id="PF00342">
    <property type="entry name" value="PGI"/>
    <property type="match status" value="1"/>
</dbReference>
<dbReference type="PRINTS" id="PR00662">
    <property type="entry name" value="G6PISOMERASE"/>
</dbReference>
<dbReference type="SUPFAM" id="SSF53697">
    <property type="entry name" value="SIS domain"/>
    <property type="match status" value="1"/>
</dbReference>
<dbReference type="PROSITE" id="PS00174">
    <property type="entry name" value="P_GLUCOSE_ISOMERASE_2"/>
    <property type="match status" value="1"/>
</dbReference>
<dbReference type="PROSITE" id="PS51463">
    <property type="entry name" value="P_GLUCOSE_ISOMERASE_3"/>
    <property type="match status" value="1"/>
</dbReference>
<evidence type="ECO:0000255" key="1">
    <source>
        <dbReference type="HAMAP-Rule" id="MF_00473"/>
    </source>
</evidence>
<comment type="function">
    <text evidence="1">Catalyzes the reversible isomerization of glucose-6-phosphate to fructose-6-phosphate.</text>
</comment>
<comment type="catalytic activity">
    <reaction evidence="1">
        <text>alpha-D-glucose 6-phosphate = beta-D-fructose 6-phosphate</text>
        <dbReference type="Rhea" id="RHEA:11816"/>
        <dbReference type="ChEBI" id="CHEBI:57634"/>
        <dbReference type="ChEBI" id="CHEBI:58225"/>
        <dbReference type="EC" id="5.3.1.9"/>
    </reaction>
</comment>
<comment type="pathway">
    <text evidence="1">Carbohydrate biosynthesis; gluconeogenesis.</text>
</comment>
<comment type="pathway">
    <text evidence="1">Carbohydrate degradation; glycolysis; D-glyceraldehyde 3-phosphate and glycerone phosphate from D-glucose: step 2/4.</text>
</comment>
<comment type="subcellular location">
    <subcellularLocation>
        <location evidence="1">Cytoplasm</location>
    </subcellularLocation>
</comment>
<comment type="similarity">
    <text evidence="1">Belongs to the GPI family.</text>
</comment>
<feature type="chain" id="PRO_1000081236" description="Glucose-6-phosphate isomerase">
    <location>
        <begin position="1"/>
        <end position="547"/>
    </location>
</feature>
<feature type="active site" description="Proton donor" evidence="1">
    <location>
        <position position="351"/>
    </location>
</feature>
<feature type="active site" evidence="1">
    <location>
        <position position="382"/>
    </location>
</feature>
<feature type="active site" evidence="1">
    <location>
        <position position="509"/>
    </location>
</feature>
<reference key="1">
    <citation type="journal article" date="2009" name="Infect. Immun.">
        <title>Comparative genomics reveal extensive transposon-mediated genomic plasticity and diversity among potential effector proteins within the genus Coxiella.</title>
        <authorList>
            <person name="Beare P.A."/>
            <person name="Unsworth N."/>
            <person name="Andoh M."/>
            <person name="Voth D.E."/>
            <person name="Omsland A."/>
            <person name="Gilk S.D."/>
            <person name="Williams K.P."/>
            <person name="Sobral B.W."/>
            <person name="Kupko J.J. III"/>
            <person name="Porcella S.F."/>
            <person name="Samuel J.E."/>
            <person name="Heinzen R.A."/>
        </authorList>
    </citation>
    <scope>NUCLEOTIDE SEQUENCE [LARGE SCALE GENOMIC DNA]</scope>
    <source>
        <strain>Dugway 5J108-111</strain>
    </source>
</reference>
<organism>
    <name type="scientific">Coxiella burnetii (strain Dugway 5J108-111)</name>
    <dbReference type="NCBI Taxonomy" id="434922"/>
    <lineage>
        <taxon>Bacteria</taxon>
        <taxon>Pseudomonadati</taxon>
        <taxon>Pseudomonadota</taxon>
        <taxon>Gammaproteobacteria</taxon>
        <taxon>Legionellales</taxon>
        <taxon>Coxiellaceae</taxon>
        <taxon>Coxiella</taxon>
    </lineage>
</organism>
<proteinExistence type="inferred from homology"/>
<protein>
    <recommendedName>
        <fullName evidence="1">Glucose-6-phosphate isomerase</fullName>
        <shortName evidence="1">GPI</shortName>
        <ecNumber evidence="1">5.3.1.9</ecNumber>
    </recommendedName>
    <alternativeName>
        <fullName evidence="1">Phosphoglucose isomerase</fullName>
        <shortName evidence="1">PGI</shortName>
    </alternativeName>
    <alternativeName>
        <fullName evidence="1">Phosphohexose isomerase</fullName>
        <shortName evidence="1">PHI</shortName>
    </alternativeName>
</protein>
<name>G6PI_COXBN</name>
<accession>A9KFK2</accession>
<gene>
    <name evidence="1" type="primary">pgi</name>
    <name type="ordered locus">CBUD_0913</name>
</gene>
<sequence length="547" mass="62326">MSLVESPPWQALKSKYQELSSLHMRDFFAQDKKRGTRLSLEAAGLYFDYSKNRVDEKTIDLLCESANACNLPLRIEQLFSGKLTNESGEMVGFHTALRQVNNFSFKTNNNAIQEIHASWEKIKKLSIRIREGDYKGFTNKSITDIVNIGIGGSSLGPQMAYNALKPYVKAPLRCHFISNLDDTDFYETVRTLNPETTLFIITSKTFTTKETLENARRATEWLMQAAKKENLIQTHFMAVTAAPEKAHEFGIQKDNIFMLWPWVGGRFSVWSAAGLSLAIAIGWEEFFEFLRGAHAMDTHFRQAEFNKNMPILLALLSIWYINFFHAKTQAIIPYSQRLVYLPDYLTQLHMESLGKSVQLDGSAVHWQTGAVVWGDLGTNSQHSFHQLFLQGTMVIPVDFIAVLKNSRESHWQLPLIANCLGQSQTLMEGYDKEGVMRDLINQGIEHEKAEKLATYRLIRGNNPSNTIILEELNPYSLGSLLALYEHKVYVQSVIWNINPFNQWGVERGKHLAKDILQALQAETDQSSFDSSTERLINYVLKIKGNRP</sequence>
<keyword id="KW-0963">Cytoplasm</keyword>
<keyword id="KW-0312">Gluconeogenesis</keyword>
<keyword id="KW-0324">Glycolysis</keyword>
<keyword id="KW-0413">Isomerase</keyword>